<feature type="chain" id="PRO_0000074181" description="U2 small nuclear ribonucleoprotein A'">
    <location>
        <begin position="1"/>
        <end position="233"/>
    </location>
</feature>
<feature type="repeat" description="LRR 1">
    <location>
        <begin position="20"/>
        <end position="40"/>
    </location>
</feature>
<feature type="repeat" description="LRR 2">
    <location>
        <begin position="42"/>
        <end position="63"/>
    </location>
</feature>
<feature type="repeat" description="LRR 3">
    <location>
        <begin position="65"/>
        <end position="86"/>
    </location>
</feature>
<feature type="repeat" description="LRR 4">
    <location>
        <begin position="89"/>
        <end position="110"/>
    </location>
</feature>
<feature type="domain" description="LRRCT">
    <location>
        <begin position="122"/>
        <end position="160"/>
    </location>
</feature>
<protein>
    <recommendedName>
        <fullName>U2 small nuclear ribonucleoprotein A'</fullName>
        <shortName>U2 snRNP A'</shortName>
    </recommendedName>
</protein>
<dbReference type="EMBL" id="CP017626">
    <property type="protein sequence ID" value="AOW29305.1"/>
    <property type="molecule type" value="Genomic_DNA"/>
</dbReference>
<dbReference type="RefSeq" id="XP_716568.1">
    <property type="nucleotide sequence ID" value="XM_711475.1"/>
</dbReference>
<dbReference type="SMR" id="Q5A449"/>
<dbReference type="FunCoup" id="Q5A449">
    <property type="interactions" value="1332"/>
</dbReference>
<dbReference type="STRING" id="237561.Q5A449"/>
<dbReference type="EnsemblFungi" id="C4_05750C_A-T">
    <property type="protein sequence ID" value="C4_05750C_A-T-p1"/>
    <property type="gene ID" value="C4_05750C_A"/>
</dbReference>
<dbReference type="GeneID" id="3641807"/>
<dbReference type="KEGG" id="cal:CAALFM_C405750CA"/>
<dbReference type="CGD" id="CAL0000184113">
    <property type="gene designation" value="LEA1"/>
</dbReference>
<dbReference type="VEuPathDB" id="FungiDB:C4_05750C_A"/>
<dbReference type="eggNOG" id="KOG1644">
    <property type="taxonomic scope" value="Eukaryota"/>
</dbReference>
<dbReference type="HOGENOM" id="CLU_061027_3_0_1"/>
<dbReference type="InParanoid" id="Q5A449"/>
<dbReference type="OMA" id="PNYREYM"/>
<dbReference type="OrthoDB" id="433501at2759"/>
<dbReference type="PRO" id="PR:Q5A449"/>
<dbReference type="Proteomes" id="UP000000559">
    <property type="component" value="Chromosome 4"/>
</dbReference>
<dbReference type="GO" id="GO:0000974">
    <property type="term" value="C:Prp19 complex"/>
    <property type="evidence" value="ECO:0007669"/>
    <property type="project" value="EnsemblFungi"/>
</dbReference>
<dbReference type="GO" id="GO:0005686">
    <property type="term" value="C:U2 snRNP"/>
    <property type="evidence" value="ECO:0000318"/>
    <property type="project" value="GO_Central"/>
</dbReference>
<dbReference type="GO" id="GO:0071004">
    <property type="term" value="C:U2-type prespliceosome"/>
    <property type="evidence" value="ECO:0007669"/>
    <property type="project" value="EnsemblFungi"/>
</dbReference>
<dbReference type="GO" id="GO:0030620">
    <property type="term" value="F:U2 snRNA binding"/>
    <property type="evidence" value="ECO:0000318"/>
    <property type="project" value="GO_Central"/>
</dbReference>
<dbReference type="GO" id="GO:0000398">
    <property type="term" value="P:mRNA splicing, via spliceosome"/>
    <property type="evidence" value="ECO:0000318"/>
    <property type="project" value="GO_Central"/>
</dbReference>
<dbReference type="FunFam" id="3.80.10.10:FF:001728">
    <property type="entry name" value="Component of U2 snRNP, putative"/>
    <property type="match status" value="1"/>
</dbReference>
<dbReference type="Gene3D" id="3.80.10.10">
    <property type="entry name" value="Ribonuclease Inhibitor"/>
    <property type="match status" value="1"/>
</dbReference>
<dbReference type="InterPro" id="IPR001611">
    <property type="entry name" value="Leu-rich_rpt"/>
</dbReference>
<dbReference type="InterPro" id="IPR032675">
    <property type="entry name" value="LRR_dom_sf"/>
</dbReference>
<dbReference type="InterPro" id="IPR044640">
    <property type="entry name" value="RU2A"/>
</dbReference>
<dbReference type="PANTHER" id="PTHR10552">
    <property type="entry name" value="U2 SMALL NUCLEAR RIBONUCLEOPROTEIN A"/>
    <property type="match status" value="1"/>
</dbReference>
<dbReference type="PANTHER" id="PTHR10552:SF6">
    <property type="entry name" value="U2 SMALL NUCLEAR RIBONUCLEOPROTEIN A"/>
    <property type="match status" value="1"/>
</dbReference>
<dbReference type="Pfam" id="PF14580">
    <property type="entry name" value="LRR_9"/>
    <property type="match status" value="1"/>
</dbReference>
<dbReference type="SUPFAM" id="SSF52058">
    <property type="entry name" value="L domain-like"/>
    <property type="match status" value="1"/>
</dbReference>
<dbReference type="PROSITE" id="PS51450">
    <property type="entry name" value="LRR"/>
    <property type="match status" value="3"/>
</dbReference>
<proteinExistence type="inferred from homology"/>
<reference key="1">
    <citation type="journal article" date="2004" name="Proc. Natl. Acad. Sci. U.S.A.">
        <title>The diploid genome sequence of Candida albicans.</title>
        <authorList>
            <person name="Jones T."/>
            <person name="Federspiel N.A."/>
            <person name="Chibana H."/>
            <person name="Dungan J."/>
            <person name="Kalman S."/>
            <person name="Magee B.B."/>
            <person name="Newport G."/>
            <person name="Thorstenson Y.R."/>
            <person name="Agabian N."/>
            <person name="Magee P.T."/>
            <person name="Davis R.W."/>
            <person name="Scherer S."/>
        </authorList>
    </citation>
    <scope>NUCLEOTIDE SEQUENCE [LARGE SCALE GENOMIC DNA]</scope>
    <source>
        <strain>SC5314 / ATCC MYA-2876</strain>
    </source>
</reference>
<reference key="2">
    <citation type="journal article" date="2007" name="Genome Biol.">
        <title>Assembly of the Candida albicans genome into sixteen supercontigs aligned on the eight chromosomes.</title>
        <authorList>
            <person name="van het Hoog M."/>
            <person name="Rast T.J."/>
            <person name="Martchenko M."/>
            <person name="Grindle S."/>
            <person name="Dignard D."/>
            <person name="Hogues H."/>
            <person name="Cuomo C."/>
            <person name="Berriman M."/>
            <person name="Scherer S."/>
            <person name="Magee B.B."/>
            <person name="Whiteway M."/>
            <person name="Chibana H."/>
            <person name="Nantel A."/>
            <person name="Magee P.T."/>
        </authorList>
    </citation>
    <scope>GENOME REANNOTATION</scope>
    <source>
        <strain>SC5314 / ATCC MYA-2876</strain>
    </source>
</reference>
<reference key="3">
    <citation type="journal article" date="2013" name="Genome Biol.">
        <title>Assembly of a phased diploid Candida albicans genome facilitates allele-specific measurements and provides a simple model for repeat and indel structure.</title>
        <authorList>
            <person name="Muzzey D."/>
            <person name="Schwartz K."/>
            <person name="Weissman J.S."/>
            <person name="Sherlock G."/>
        </authorList>
    </citation>
    <scope>NUCLEOTIDE SEQUENCE [LARGE SCALE GENOMIC DNA]</scope>
    <scope>GENOME REANNOTATION</scope>
    <source>
        <strain>SC5314 / ATCC MYA-2876</strain>
    </source>
</reference>
<sequence>MRLTAQVINEAPEILNPEGKLTLLLRDLQITELENLAITQNKYQVIDLSNNDLISLGNIPKRFNNLQCLLLSNNNISYIDDESFPSDNHITSITLFNNNIYQFQKSFKDKFPKLETLILLGNPITEMENYRYFIIWLIPSLKVLDFKKVKQAERKTSEDMFGTNRDEFNSLAQQMFKNENTEIKLDGKSDRQVKNFVKKMTDEERQQLLKKLETATSIEEIERIENDLKEGAV</sequence>
<organism>
    <name type="scientific">Candida albicans (strain SC5314 / ATCC MYA-2876)</name>
    <name type="common">Yeast</name>
    <dbReference type="NCBI Taxonomy" id="237561"/>
    <lineage>
        <taxon>Eukaryota</taxon>
        <taxon>Fungi</taxon>
        <taxon>Dikarya</taxon>
        <taxon>Ascomycota</taxon>
        <taxon>Saccharomycotina</taxon>
        <taxon>Pichiomycetes</taxon>
        <taxon>Debaryomycetaceae</taxon>
        <taxon>Candida/Lodderomyces clade</taxon>
        <taxon>Candida</taxon>
    </lineage>
</organism>
<keyword id="KW-0433">Leucine-rich repeat</keyword>
<keyword id="KW-0507">mRNA processing</keyword>
<keyword id="KW-0508">mRNA splicing</keyword>
<keyword id="KW-0539">Nucleus</keyword>
<keyword id="KW-1185">Reference proteome</keyword>
<keyword id="KW-0677">Repeat</keyword>
<keyword id="KW-0747">Spliceosome</keyword>
<comment type="function">
    <text evidence="1">Involved in pre-mRNA splicing.</text>
</comment>
<comment type="subunit">
    <text evidence="1">Associated with the spliceosome.</text>
</comment>
<comment type="subcellular location">
    <subcellularLocation>
        <location evidence="1">Nucleus</location>
    </subcellularLocation>
</comment>
<comment type="similarity">
    <text evidence="2">Belongs to the U2 small nuclear ribonucleoprotein A family.</text>
</comment>
<gene>
    <name type="primary">LEA1</name>
    <name type="ordered locus">CAALFM_C405750CA</name>
    <name type="ORF">CaO19.1260</name>
    <name type="ORF">CaO19.8845</name>
</gene>
<name>RU2A_CANAL</name>
<accession>Q5A449</accession>
<accession>A0A1D8PMD9</accession>
<evidence type="ECO:0000250" key="1"/>
<evidence type="ECO:0000305" key="2"/>